<gene>
    <name type="primary">Fbxo9</name>
</gene>
<accession>Q5U2X1</accession>
<proteinExistence type="evidence at protein level"/>
<comment type="function">
    <text evidence="1 2">Substrate recognition component of a SCF (SKP1-CUL1-F-box protein) E3 ubiquitin-protein ligase complex which mediates the ubiquitination and subsequent proteasomal degradation of target proteins and plays a role in several biological processes such as cell cycle, cell proliferation, or maintenance of chromosome stability. Ubiquitinates mTORC1-bound TTI1 and TELO2 when they are phosphorylated by CK2 following growth factor deprivation, leading to their degradation. In contrast, does not mediate ubiquitination of TTI1 and TELO2 when they are part of the mTORC2 complex. As a consequence, mTORC1 is inactivated to restrain cell growth and protein translation, while mTORC2 is the activated due to the relief of feedback inhibition by mTORC1. Plays a role in maintaining epithelial cell survival by regulating the turn-over of chromatin modulator PRMT4 through ubiquitination and degradation by the proteasomal pathway (By similarity). Also regulates PPARgamma stability by facilitating PPARgamma/PPARG ubiquitination and thereby plays a role in adipocyte differentiation (By similarity).</text>
</comment>
<comment type="pathway">
    <text>Protein modification; protein ubiquitination.</text>
</comment>
<comment type="subunit">
    <text evidence="2">Part of the SCF (SKP1-CUL1-F-box) E3 ubiquitin-protein ligase complex SCF(FBXO9) composed of CUL1, SKP1, RBX1 and FBXO9. Interacts with TTI1 and TELO2; when TTI1 and TELO2 are phosphorylated by CK2.</text>
</comment>
<comment type="subcellular location">
    <subcellularLocation>
        <location evidence="2">Cytoplasm</location>
    </subcellularLocation>
</comment>
<organism>
    <name type="scientific">Rattus norvegicus</name>
    <name type="common">Rat</name>
    <dbReference type="NCBI Taxonomy" id="10116"/>
    <lineage>
        <taxon>Eukaryota</taxon>
        <taxon>Metazoa</taxon>
        <taxon>Chordata</taxon>
        <taxon>Craniata</taxon>
        <taxon>Vertebrata</taxon>
        <taxon>Euteleostomi</taxon>
        <taxon>Mammalia</taxon>
        <taxon>Eutheria</taxon>
        <taxon>Euarchontoglires</taxon>
        <taxon>Glires</taxon>
        <taxon>Rodentia</taxon>
        <taxon>Myomorpha</taxon>
        <taxon>Muroidea</taxon>
        <taxon>Muridae</taxon>
        <taxon>Murinae</taxon>
        <taxon>Rattus</taxon>
    </lineage>
</organism>
<protein>
    <recommendedName>
        <fullName>F-box only protein 9</fullName>
    </recommendedName>
</protein>
<reference key="1">
    <citation type="journal article" date="2004" name="Genome Res.">
        <title>The status, quality, and expansion of the NIH full-length cDNA project: the Mammalian Gene Collection (MGC).</title>
        <authorList>
            <consortium name="The MGC Project Team"/>
        </authorList>
    </citation>
    <scope>NUCLEOTIDE SEQUENCE [LARGE SCALE MRNA]</scope>
    <source>
        <tissue>Testis</tissue>
    </source>
</reference>
<reference key="2">
    <citation type="journal article" date="2012" name="Nat. Commun.">
        <title>Quantitative maps of protein phosphorylation sites across 14 different rat organs and tissues.</title>
        <authorList>
            <person name="Lundby A."/>
            <person name="Secher A."/>
            <person name="Lage K."/>
            <person name="Nordsborg N.B."/>
            <person name="Dmytriyev A."/>
            <person name="Lundby C."/>
            <person name="Olsen J.V."/>
        </authorList>
    </citation>
    <scope>PHOSPHORYLATION [LARGE SCALE ANALYSIS] AT SER-124</scope>
    <scope>IDENTIFICATION BY MASS SPECTROMETRY [LARGE SCALE ANALYSIS]</scope>
</reference>
<keyword id="KW-0963">Cytoplasm</keyword>
<keyword id="KW-0597">Phosphoprotein</keyword>
<keyword id="KW-1185">Reference proteome</keyword>
<keyword id="KW-0802">TPR repeat</keyword>
<keyword id="KW-0833">Ubl conjugation pathway</keyword>
<name>FBX9_RAT</name>
<sequence>MAEAEEDCHSDAVRVGDEGHESPAERDLQAQLQMFRAQWMFELTPGVGSSNVESRPCRAGRSSILKAAADKGRQELAKEEKARELFLKAVEEEQNGALYEAIKFYRRAMQLVPDIEFKITYTRSPDGDGVGSSYIEDNEDASKMADLLSYFQQQLTFQESVLKLCQPELETSQTHISVLPMEVLMYIFRWVVSSDLDLRSLEQLSLVCRGFYICARDPEIWRLACLKVWGRSCMKLVPFSSWREMFLERPRVRFDGVYISKTTYIRQGEQSLDGFYRAWHQVEYYRYIRFFPDGHVMMLTTPEEPPSIVPRLRTRNTRTDAILLGHYRLSQDADNQTKVFAVITKKKEEKPLDHKYRYFRRVPVQEADHNFHVGLQLCSSGHQRFNKLIWIHHSCHITYRSTGETAVSAFDIDKMYTPLFFARVRSYTAFSERPL</sequence>
<evidence type="ECO:0000250" key="1">
    <source>
        <dbReference type="UniProtKB" id="Q8BK06"/>
    </source>
</evidence>
<evidence type="ECO:0000250" key="2">
    <source>
        <dbReference type="UniProtKB" id="Q9UK97"/>
    </source>
</evidence>
<evidence type="ECO:0000255" key="3">
    <source>
        <dbReference type="PROSITE-ProRule" id="PRU00080"/>
    </source>
</evidence>
<evidence type="ECO:0000256" key="4">
    <source>
        <dbReference type="SAM" id="MobiDB-lite"/>
    </source>
</evidence>
<evidence type="ECO:0007744" key="5">
    <source>
    </source>
</evidence>
<dbReference type="EMBL" id="BC085831">
    <property type="protein sequence ID" value="AAH85831.1"/>
    <property type="molecule type" value="mRNA"/>
</dbReference>
<dbReference type="RefSeq" id="NP_001011998.1">
    <property type="nucleotide sequence ID" value="NM_001011998.1"/>
</dbReference>
<dbReference type="FunCoup" id="Q5U2X1">
    <property type="interactions" value="991"/>
</dbReference>
<dbReference type="STRING" id="10116.ENSRNOP00000010961"/>
<dbReference type="iPTMnet" id="Q5U2X1"/>
<dbReference type="PhosphoSitePlus" id="Q5U2X1"/>
<dbReference type="PaxDb" id="10116-ENSRNOP00000010961"/>
<dbReference type="GeneID" id="300849"/>
<dbReference type="KEGG" id="rno:300849"/>
<dbReference type="UCSC" id="RGD:1310374">
    <property type="organism name" value="rat"/>
</dbReference>
<dbReference type="AGR" id="RGD:1310374"/>
<dbReference type="CTD" id="26268"/>
<dbReference type="RGD" id="1310374">
    <property type="gene designation" value="Fbxo9"/>
</dbReference>
<dbReference type="VEuPathDB" id="HostDB:ENSRNOG00000008214"/>
<dbReference type="eggNOG" id="KOG2997">
    <property type="taxonomic scope" value="Eukaryota"/>
</dbReference>
<dbReference type="HOGENOM" id="CLU_041758_0_0_1"/>
<dbReference type="InParanoid" id="Q5U2X1"/>
<dbReference type="PhylomeDB" id="Q5U2X1"/>
<dbReference type="TreeFam" id="TF324797"/>
<dbReference type="Reactome" id="R-RNO-8951664">
    <property type="pathway name" value="Neddylation"/>
</dbReference>
<dbReference type="Reactome" id="R-RNO-983168">
    <property type="pathway name" value="Antigen processing: Ubiquitination &amp; Proteasome degradation"/>
</dbReference>
<dbReference type="UniPathway" id="UPA00143"/>
<dbReference type="PRO" id="PR:Q5U2X1"/>
<dbReference type="Proteomes" id="UP000002494">
    <property type="component" value="Chromosome 8"/>
</dbReference>
<dbReference type="Bgee" id="ENSRNOG00000008214">
    <property type="expression patterns" value="Expressed in cerebellum and 19 other cell types or tissues"/>
</dbReference>
<dbReference type="GO" id="GO:0005737">
    <property type="term" value="C:cytoplasm"/>
    <property type="evidence" value="ECO:0000250"/>
    <property type="project" value="UniProtKB"/>
</dbReference>
<dbReference type="GO" id="GO:0019005">
    <property type="term" value="C:SCF ubiquitin ligase complex"/>
    <property type="evidence" value="ECO:0000250"/>
    <property type="project" value="UniProtKB"/>
</dbReference>
<dbReference type="GO" id="GO:1990756">
    <property type="term" value="F:ubiquitin-like ligase-substrate adaptor activity"/>
    <property type="evidence" value="ECO:0000266"/>
    <property type="project" value="RGD"/>
</dbReference>
<dbReference type="GO" id="GO:0045444">
    <property type="term" value="P:fat cell differentiation"/>
    <property type="evidence" value="ECO:0000266"/>
    <property type="project" value="RGD"/>
</dbReference>
<dbReference type="GO" id="GO:0045087">
    <property type="term" value="P:innate immune response"/>
    <property type="evidence" value="ECO:0000266"/>
    <property type="project" value="RGD"/>
</dbReference>
<dbReference type="GO" id="GO:0043161">
    <property type="term" value="P:proteasome-mediated ubiquitin-dependent protein catabolic process"/>
    <property type="evidence" value="ECO:0000266"/>
    <property type="project" value="RGD"/>
</dbReference>
<dbReference type="GO" id="GO:0070936">
    <property type="term" value="P:protein K48-linked ubiquitination"/>
    <property type="evidence" value="ECO:0000266"/>
    <property type="project" value="RGD"/>
</dbReference>
<dbReference type="GO" id="GO:0016567">
    <property type="term" value="P:protein ubiquitination"/>
    <property type="evidence" value="ECO:0000250"/>
    <property type="project" value="UniProtKB"/>
</dbReference>
<dbReference type="GO" id="GO:0032006">
    <property type="term" value="P:regulation of TOR signaling"/>
    <property type="evidence" value="ECO:0000250"/>
    <property type="project" value="UniProtKB"/>
</dbReference>
<dbReference type="GO" id="GO:0031146">
    <property type="term" value="P:SCF-dependent proteasomal ubiquitin-dependent protein catabolic process"/>
    <property type="evidence" value="ECO:0000250"/>
    <property type="project" value="UniProtKB"/>
</dbReference>
<dbReference type="CDD" id="cd22089">
    <property type="entry name" value="F-box_FBXO9"/>
    <property type="match status" value="1"/>
</dbReference>
<dbReference type="FunFam" id="1.20.1280.50:FF:000012">
    <property type="entry name" value="F-box only protein 9"/>
    <property type="match status" value="1"/>
</dbReference>
<dbReference type="Gene3D" id="1.20.1280.50">
    <property type="match status" value="1"/>
</dbReference>
<dbReference type="InterPro" id="IPR036047">
    <property type="entry name" value="F-box-like_dom_sf"/>
</dbReference>
<dbReference type="InterPro" id="IPR001810">
    <property type="entry name" value="F-box_dom"/>
</dbReference>
<dbReference type="InterPro" id="IPR045464">
    <property type="entry name" value="Hrt3/FBXO9_C"/>
</dbReference>
<dbReference type="InterPro" id="IPR036181">
    <property type="entry name" value="MIT_dom_sf"/>
</dbReference>
<dbReference type="PANTHER" id="PTHR12874">
    <property type="entry name" value="F-BOX ONLY PROTEIN 48-RELATED"/>
    <property type="match status" value="1"/>
</dbReference>
<dbReference type="PANTHER" id="PTHR12874:SF29">
    <property type="entry name" value="F-BOX ONLY PROTEIN 9"/>
    <property type="match status" value="1"/>
</dbReference>
<dbReference type="Pfam" id="PF12937">
    <property type="entry name" value="F-box-like"/>
    <property type="match status" value="1"/>
</dbReference>
<dbReference type="Pfam" id="PF19270">
    <property type="entry name" value="FBO_C"/>
    <property type="match status" value="1"/>
</dbReference>
<dbReference type="SUPFAM" id="SSF81383">
    <property type="entry name" value="F-box domain"/>
    <property type="match status" value="1"/>
</dbReference>
<dbReference type="SUPFAM" id="SSF116846">
    <property type="entry name" value="MIT domain"/>
    <property type="match status" value="1"/>
</dbReference>
<dbReference type="PROSITE" id="PS50181">
    <property type="entry name" value="FBOX"/>
    <property type="match status" value="1"/>
</dbReference>
<feature type="chain" id="PRO_0000119888" description="F-box only protein 9">
    <location>
        <begin position="1"/>
        <end position="435"/>
    </location>
</feature>
<feature type="repeat" description="TPR">
    <location>
        <begin position="82"/>
        <end position="115"/>
    </location>
</feature>
<feature type="domain" description="F-box" evidence="3">
    <location>
        <begin position="173"/>
        <end position="224"/>
    </location>
</feature>
<feature type="region of interest" description="Disordered" evidence="4">
    <location>
        <begin position="1"/>
        <end position="25"/>
    </location>
</feature>
<feature type="compositionally biased region" description="Basic and acidic residues" evidence="4">
    <location>
        <begin position="7"/>
        <end position="25"/>
    </location>
</feature>
<feature type="modified residue" description="Phosphoserine" evidence="5">
    <location>
        <position position="124"/>
    </location>
</feature>